<dbReference type="EC" id="7.-.-.-" evidence="3"/>
<dbReference type="EMBL" id="ACJE01000019">
    <property type="protein sequence ID" value="EHA20132.1"/>
    <property type="status" value="ALT_SEQ"/>
    <property type="molecule type" value="Genomic_DNA"/>
</dbReference>
<dbReference type="SMR" id="G3YC86"/>
<dbReference type="STRING" id="380704.G3YC86"/>
<dbReference type="HOGENOM" id="CLU_015166_5_1_1"/>
<dbReference type="OrthoDB" id="88249at5052"/>
<dbReference type="Proteomes" id="UP000009038">
    <property type="component" value="Unassembled WGS sequence"/>
</dbReference>
<dbReference type="GO" id="GO:0005743">
    <property type="term" value="C:mitochondrial inner membrane"/>
    <property type="evidence" value="ECO:0007669"/>
    <property type="project" value="UniProtKB-SubCell"/>
</dbReference>
<dbReference type="GO" id="GO:0071913">
    <property type="term" value="F:citrate secondary active transmembrane transporter activity"/>
    <property type="evidence" value="ECO:0007669"/>
    <property type="project" value="TreeGrafter"/>
</dbReference>
<dbReference type="GO" id="GO:0006843">
    <property type="term" value="P:mitochondrial citrate transmembrane transport"/>
    <property type="evidence" value="ECO:0007669"/>
    <property type="project" value="TreeGrafter"/>
</dbReference>
<dbReference type="FunFam" id="1.50.40.10:FF:000092">
    <property type="entry name" value="Mitochondrial tricarboxylate transporter"/>
    <property type="match status" value="1"/>
</dbReference>
<dbReference type="FunFam" id="1.50.40.10:FF:000064">
    <property type="entry name" value="Mitochondrial tricarboxylate transporter (Ctp)"/>
    <property type="match status" value="1"/>
</dbReference>
<dbReference type="Gene3D" id="1.50.40.10">
    <property type="entry name" value="Mitochondrial carrier domain"/>
    <property type="match status" value="2"/>
</dbReference>
<dbReference type="InterPro" id="IPR018108">
    <property type="entry name" value="Mitochondrial_sb/sol_carrier"/>
</dbReference>
<dbReference type="InterPro" id="IPR023395">
    <property type="entry name" value="Mt_carrier_dom_sf"/>
</dbReference>
<dbReference type="InterPro" id="IPR049563">
    <property type="entry name" value="TXTP-like"/>
</dbReference>
<dbReference type="PANTHER" id="PTHR45788">
    <property type="entry name" value="SUCCINATE/FUMARATE MITOCHONDRIAL TRANSPORTER-RELATED"/>
    <property type="match status" value="1"/>
</dbReference>
<dbReference type="PANTHER" id="PTHR45788:SF4">
    <property type="entry name" value="TRICARBOXYLATE TRANSPORT PROTEIN, MITOCHONDRIAL"/>
    <property type="match status" value="1"/>
</dbReference>
<dbReference type="Pfam" id="PF00153">
    <property type="entry name" value="Mito_carr"/>
    <property type="match status" value="3"/>
</dbReference>
<dbReference type="SUPFAM" id="SSF103506">
    <property type="entry name" value="Mitochondrial carrier"/>
    <property type="match status" value="1"/>
</dbReference>
<dbReference type="PROSITE" id="PS50920">
    <property type="entry name" value="SOLCAR"/>
    <property type="match status" value="3"/>
</dbReference>
<feature type="chain" id="PRO_0000457328" description="Mitochondrial citrate transporter A">
    <location>
        <begin position="1"/>
        <end position="297"/>
    </location>
</feature>
<feature type="transmembrane region" description="Helical; Name=1" evidence="1">
    <location>
        <begin position="18"/>
        <end position="31"/>
    </location>
</feature>
<feature type="transmembrane region" description="Helical; Name=2" evidence="1">
    <location>
        <begin position="61"/>
        <end position="81"/>
    </location>
</feature>
<feature type="transmembrane region" description="Helical; Name=3" evidence="1">
    <location>
        <begin position="99"/>
        <end position="119"/>
    </location>
</feature>
<feature type="transmembrane region" description="Helical; Name=4" evidence="1">
    <location>
        <begin position="160"/>
        <end position="180"/>
    </location>
</feature>
<feature type="transmembrane region" description="Helical; Name=5" evidence="1">
    <location>
        <begin position="192"/>
        <end position="212"/>
    </location>
</feature>
<feature type="transmembrane region" description="Helical; Name=6" evidence="1">
    <location>
        <begin position="251"/>
        <end position="272"/>
    </location>
</feature>
<feature type="repeat" description="Solcar 1" evidence="2">
    <location>
        <begin position="12"/>
        <end position="91"/>
    </location>
</feature>
<feature type="repeat" description="Solcar 2" evidence="2">
    <location>
        <begin position="102"/>
        <end position="188"/>
    </location>
</feature>
<feature type="repeat" description="Solcar 3" evidence="2">
    <location>
        <begin position="199"/>
        <end position="286"/>
    </location>
</feature>
<evidence type="ECO:0000255" key="1"/>
<evidence type="ECO:0000255" key="2">
    <source>
        <dbReference type="PROSITE-ProRule" id="PRU00282"/>
    </source>
</evidence>
<evidence type="ECO:0000269" key="3">
    <source>
    </source>
</evidence>
<evidence type="ECO:0000303" key="4">
    <source>
    </source>
</evidence>
<evidence type="ECO:0000305" key="5"/>
<evidence type="ECO:0000305" key="6">
    <source>
    </source>
</evidence>
<comment type="function">
    <text evidence="3">Mitochondrial transporter that mediates citrate export from mitochondria to cytoplasm (PubMed:36177470). Both ctpA, ctpB, and ctpD play important roles in citric acid transport across the mitochondrial membrane and function in a redundant manner (PubMed:36177470).</text>
</comment>
<comment type="catalytic activity">
    <reaction evidence="3">
        <text>citrate(in) + H(+)(in) = citrate(out) + H(+)(out)</text>
        <dbReference type="Rhea" id="RHEA:32123"/>
        <dbReference type="ChEBI" id="CHEBI:15378"/>
        <dbReference type="ChEBI" id="CHEBI:16947"/>
    </reaction>
</comment>
<comment type="subcellular location">
    <subcellularLocation>
        <location evidence="6">Mitochondrion inner membrane</location>
        <topology evidence="1">Multi-pass membrane protein</topology>
    </subcellularLocation>
</comment>
<comment type="disruption phenotype">
    <text evidence="3">Results in the production of citric acid decreased by 15.8 and 18.3% at 3 and 5 days, respectively (PubMed:36177470). Leads to fluffy and albino colonies, and reduced conidia formation, when all 6 genes ctpA to ctpF are deleted (PubMed:36177470).</text>
</comment>
<comment type="similarity">
    <text evidence="5">Belongs to the mitochondrial carrier (TC 2.A.29) family.</text>
</comment>
<comment type="sequence caution" evidence="5">
    <conflict type="erroneous gene model prediction">
        <sequence resource="EMBL-CDS" id="EHA20132"/>
    </conflict>
</comment>
<keyword id="KW-0472">Membrane</keyword>
<keyword id="KW-0496">Mitochondrion</keyword>
<keyword id="KW-0999">Mitochondrion inner membrane</keyword>
<keyword id="KW-0677">Repeat</keyword>
<keyword id="KW-1278">Translocase</keyword>
<keyword id="KW-0812">Transmembrane</keyword>
<keyword id="KW-1133">Transmembrane helix</keyword>
<keyword id="KW-0813">Transport</keyword>
<sequence length="297" mass="32558">MATSENDKRSKPSSLRSIIAGSTAGAVEIAITYPAEFAKTRSQLNRRLPDAKKLPWPPFGSQWYAGCTTLIIGNSLKAGIRFVAFDWLKSLLQDENGQISGPKTVIAGFGAGFTESLLAVTPFESIKTQLIDDRKSQNPRMRGFLHGSRVIFQERGVRGFFQGFVPTTARQAANSATRFSSYTMLKQMAQGYVAPGEKLGTASTFALGGIAGLITVYVTQPLDTVKTSRMQSLEASKNYKNSFVCAARIFKDEGIFTFWSGAVPRLARLIMSGGIVFTMYEKTMDALDGLDPERRYI</sequence>
<name>CTPA_ASPNA</name>
<reference key="1">
    <citation type="journal article" date="2011" name="Genome Res.">
        <title>Comparative genomics of citric-acid-producing Aspergillus niger ATCC 1015 versus enzyme-producing CBS 513.88.</title>
        <authorList>
            <person name="Andersen M.R."/>
            <person name="Salazar M.P."/>
            <person name="Schaap P.J."/>
            <person name="van de Vondervoort P.J.I."/>
            <person name="Culley D."/>
            <person name="Thykaer J."/>
            <person name="Frisvad J.C."/>
            <person name="Nielsen K.F."/>
            <person name="Albang R."/>
            <person name="Albermann K."/>
            <person name="Berka R.M."/>
            <person name="Braus G.H."/>
            <person name="Braus-Stromeyer S.A."/>
            <person name="Corrochano L.M."/>
            <person name="Dai Z."/>
            <person name="van Dijck P.W.M."/>
            <person name="Hofmann G."/>
            <person name="Lasure L.L."/>
            <person name="Magnuson J.K."/>
            <person name="Menke H."/>
            <person name="Meijer M."/>
            <person name="Meijer S.L."/>
            <person name="Nielsen J.B."/>
            <person name="Nielsen M.L."/>
            <person name="van Ooyen A.J.J."/>
            <person name="Pel H.J."/>
            <person name="Poulsen L."/>
            <person name="Samson R.A."/>
            <person name="Stam H."/>
            <person name="Tsang A."/>
            <person name="van den Brink J.M."/>
            <person name="Atkins A."/>
            <person name="Aerts A."/>
            <person name="Shapiro H."/>
            <person name="Pangilinan J."/>
            <person name="Salamov A."/>
            <person name="Lou Y."/>
            <person name="Lindquist E."/>
            <person name="Lucas S."/>
            <person name="Grimwood J."/>
            <person name="Grigoriev I.V."/>
            <person name="Kubicek C.P."/>
            <person name="Martinez D."/>
            <person name="van Peij N.N.M.E."/>
            <person name="Roubos J.A."/>
            <person name="Nielsen J."/>
            <person name="Baker S.E."/>
        </authorList>
    </citation>
    <scope>NUCLEOTIDE SEQUENCE [LARGE SCALE GENOMIC DNA]</scope>
    <source>
        <strain>ATCC 1015 / CBS 113.46 / FGSC A1144 / LSHB Ac4 / NCTC 3858a / NRRL 328 / USDA 3528.7</strain>
    </source>
</reference>
<reference key="2">
    <citation type="journal article" date="2022" name="Front. Microbiol.">
        <title>Identification and genetic characterization of mitochondrial citrate transporters in Aspergillus niger.</title>
        <authorList>
            <person name="Cao W."/>
            <person name="Zhang L."/>
            <person name="Wu L."/>
            <person name="Zhang M."/>
            <person name="Liu J."/>
            <person name="Xie Z."/>
            <person name="Liu H."/>
        </authorList>
    </citation>
    <scope>FUNCTION</scope>
    <scope>DISRUPTION PHENOTYPE</scope>
    <scope>TRANSPORT ACTIVITY</scope>
</reference>
<gene>
    <name evidence="4" type="primary">ctpA</name>
    <name type="ORF">ASPNIDRAFT_136079</name>
</gene>
<accession>G3YC86</accession>
<protein>
    <recommendedName>
        <fullName evidence="4">Mitochondrial citrate transporter A</fullName>
        <ecNumber evidence="3">7.-.-.-</ecNumber>
    </recommendedName>
</protein>
<proteinExistence type="inferred from homology"/>
<organism>
    <name type="scientific">Aspergillus niger (strain ATCC 1015 / CBS 113.46 / FGSC A1144 / LSHB Ac4 / NCTC 3858a / NRRL 328 / USDA 3528.7)</name>
    <dbReference type="NCBI Taxonomy" id="380704"/>
    <lineage>
        <taxon>Eukaryota</taxon>
        <taxon>Fungi</taxon>
        <taxon>Dikarya</taxon>
        <taxon>Ascomycota</taxon>
        <taxon>Pezizomycotina</taxon>
        <taxon>Eurotiomycetes</taxon>
        <taxon>Eurotiomycetidae</taxon>
        <taxon>Eurotiales</taxon>
        <taxon>Aspergillaceae</taxon>
        <taxon>Aspergillus</taxon>
        <taxon>Aspergillus subgen. Circumdati</taxon>
    </lineage>
</organism>